<reference key="1">
    <citation type="journal article" date="2003" name="Proc. Natl. Acad. Sci. U.S.A.">
        <title>The complete genome sequence of Chromobacterium violaceum reveals remarkable and exploitable bacterial adaptability.</title>
        <authorList>
            <person name="Vasconcelos A.T.R."/>
            <person name="de Almeida D.F."/>
            <person name="Hungria M."/>
            <person name="Guimaraes C.T."/>
            <person name="Antonio R.V."/>
            <person name="Almeida F.C."/>
            <person name="de Almeida L.G.P."/>
            <person name="de Almeida R."/>
            <person name="Alves-Gomes J.A."/>
            <person name="Andrade E.M."/>
            <person name="Araripe J."/>
            <person name="de Araujo M.F.F."/>
            <person name="Astolfi-Filho S."/>
            <person name="Azevedo V."/>
            <person name="Baptista A.J."/>
            <person name="Bataus L.A.M."/>
            <person name="Batista J.S."/>
            <person name="Belo A."/>
            <person name="van den Berg C."/>
            <person name="Bogo M."/>
            <person name="Bonatto S."/>
            <person name="Bordignon J."/>
            <person name="Brigido M.M."/>
            <person name="Brito C.A."/>
            <person name="Brocchi M."/>
            <person name="Burity H.A."/>
            <person name="Camargo A.A."/>
            <person name="Cardoso D.D.P."/>
            <person name="Carneiro N.P."/>
            <person name="Carraro D.M."/>
            <person name="Carvalho C.M.B."/>
            <person name="Cascardo J.C.M."/>
            <person name="Cavada B.S."/>
            <person name="Chueire L.M.O."/>
            <person name="Creczynski-Pasa T.B."/>
            <person name="Cunha-Junior N.C."/>
            <person name="Fagundes N."/>
            <person name="Falcao C.L."/>
            <person name="Fantinatti F."/>
            <person name="Farias I.P."/>
            <person name="Felipe M.S.S."/>
            <person name="Ferrari L.P."/>
            <person name="Ferro J.A."/>
            <person name="Ferro M.I.T."/>
            <person name="Franco G.R."/>
            <person name="Freitas N.S.A."/>
            <person name="Furlan L.R."/>
            <person name="Gazzinelli R.T."/>
            <person name="Gomes E.A."/>
            <person name="Goncalves P.R."/>
            <person name="Grangeiro T.B."/>
            <person name="Grattapaglia D."/>
            <person name="Grisard E.C."/>
            <person name="Hanna E.S."/>
            <person name="Jardim S.N."/>
            <person name="Laurino J."/>
            <person name="Leoi L.C.T."/>
            <person name="Lima L.F.A."/>
            <person name="Loureiro M.F."/>
            <person name="Lyra M.C.C.P."/>
            <person name="Madeira H.M.F."/>
            <person name="Manfio G.P."/>
            <person name="Maranhao A.Q."/>
            <person name="Martins W.S."/>
            <person name="di Mauro S.M.Z."/>
            <person name="de Medeiros S.R.B."/>
            <person name="Meissner R.V."/>
            <person name="Moreira M.A.M."/>
            <person name="Nascimento F.F."/>
            <person name="Nicolas M.F."/>
            <person name="Oliveira J.G."/>
            <person name="Oliveira S.C."/>
            <person name="Paixao R.F.C."/>
            <person name="Parente J.A."/>
            <person name="Pedrosa F.O."/>
            <person name="Pena S.D.J."/>
            <person name="Pereira J.O."/>
            <person name="Pereira M."/>
            <person name="Pinto L.S.R.C."/>
            <person name="Pinto L.S."/>
            <person name="Porto J.I.R."/>
            <person name="Potrich D.P."/>
            <person name="Ramalho-Neto C.E."/>
            <person name="Reis A.M.M."/>
            <person name="Rigo L.U."/>
            <person name="Rondinelli E."/>
            <person name="Santos E.B.P."/>
            <person name="Santos F.R."/>
            <person name="Schneider M.P.C."/>
            <person name="Seuanez H.N."/>
            <person name="Silva A.M.R."/>
            <person name="da Silva A.L.C."/>
            <person name="Silva D.W."/>
            <person name="Silva R."/>
            <person name="Simoes I.C."/>
            <person name="Simon D."/>
            <person name="Soares C.M.A."/>
            <person name="Soares R.B.A."/>
            <person name="Souza E.M."/>
            <person name="Souza K.R.L."/>
            <person name="Souza R.C."/>
            <person name="Steffens M.B.R."/>
            <person name="Steindel M."/>
            <person name="Teixeira S.R."/>
            <person name="Urmenyi T."/>
            <person name="Vettore A."/>
            <person name="Wassem R."/>
            <person name="Zaha A."/>
            <person name="Simpson A.J.G."/>
        </authorList>
    </citation>
    <scope>NUCLEOTIDE SEQUENCE [LARGE SCALE GENOMIC DNA]</scope>
    <source>
        <strain>ATCC 12472 / DSM 30191 / JCM 1249 / CCUG 213 / NBRC 12614 / NCIMB 9131 / NCTC 9757 / MK</strain>
    </source>
</reference>
<gene>
    <name evidence="1" type="primary">rpsO</name>
    <name type="ordered locus">CV_1465</name>
</gene>
<comment type="function">
    <text evidence="1">One of the primary rRNA binding proteins, it binds directly to 16S rRNA where it helps nucleate assembly of the platform of the 30S subunit by binding and bridging several RNA helices of the 16S rRNA.</text>
</comment>
<comment type="function">
    <text evidence="1">Forms an intersubunit bridge (bridge B4) with the 23S rRNA of the 50S subunit in the ribosome.</text>
</comment>
<comment type="subunit">
    <text evidence="1">Part of the 30S ribosomal subunit. Forms a bridge to the 50S subunit in the 70S ribosome, contacting the 23S rRNA.</text>
</comment>
<comment type="similarity">
    <text evidence="1">Belongs to the universal ribosomal protein uS15 family.</text>
</comment>
<proteinExistence type="inferred from homology"/>
<dbReference type="EMBL" id="AE016825">
    <property type="protein sequence ID" value="AAQ59140.1"/>
    <property type="molecule type" value="Genomic_DNA"/>
</dbReference>
<dbReference type="RefSeq" id="WP_011135017.1">
    <property type="nucleotide sequence ID" value="NC_005085.1"/>
</dbReference>
<dbReference type="SMR" id="Q7NY11"/>
<dbReference type="STRING" id="243365.CV_1465"/>
<dbReference type="GeneID" id="66367160"/>
<dbReference type="KEGG" id="cvi:CV_1465"/>
<dbReference type="eggNOG" id="COG0184">
    <property type="taxonomic scope" value="Bacteria"/>
</dbReference>
<dbReference type="HOGENOM" id="CLU_148518_0_0_4"/>
<dbReference type="OrthoDB" id="9799262at2"/>
<dbReference type="Proteomes" id="UP000001424">
    <property type="component" value="Chromosome"/>
</dbReference>
<dbReference type="GO" id="GO:0022627">
    <property type="term" value="C:cytosolic small ribosomal subunit"/>
    <property type="evidence" value="ECO:0007669"/>
    <property type="project" value="TreeGrafter"/>
</dbReference>
<dbReference type="GO" id="GO:0019843">
    <property type="term" value="F:rRNA binding"/>
    <property type="evidence" value="ECO:0007669"/>
    <property type="project" value="UniProtKB-UniRule"/>
</dbReference>
<dbReference type="GO" id="GO:0003735">
    <property type="term" value="F:structural constituent of ribosome"/>
    <property type="evidence" value="ECO:0007669"/>
    <property type="project" value="InterPro"/>
</dbReference>
<dbReference type="GO" id="GO:0006412">
    <property type="term" value="P:translation"/>
    <property type="evidence" value="ECO:0007669"/>
    <property type="project" value="UniProtKB-UniRule"/>
</dbReference>
<dbReference type="CDD" id="cd00353">
    <property type="entry name" value="Ribosomal_S15p_S13e"/>
    <property type="match status" value="1"/>
</dbReference>
<dbReference type="FunFam" id="1.10.287.10:FF:000002">
    <property type="entry name" value="30S ribosomal protein S15"/>
    <property type="match status" value="1"/>
</dbReference>
<dbReference type="Gene3D" id="6.10.250.3130">
    <property type="match status" value="1"/>
</dbReference>
<dbReference type="Gene3D" id="1.10.287.10">
    <property type="entry name" value="S15/NS1, RNA-binding"/>
    <property type="match status" value="1"/>
</dbReference>
<dbReference type="HAMAP" id="MF_01343_B">
    <property type="entry name" value="Ribosomal_uS15_B"/>
    <property type="match status" value="1"/>
</dbReference>
<dbReference type="InterPro" id="IPR000589">
    <property type="entry name" value="Ribosomal_uS15"/>
</dbReference>
<dbReference type="InterPro" id="IPR005290">
    <property type="entry name" value="Ribosomal_uS15_bac-type"/>
</dbReference>
<dbReference type="InterPro" id="IPR009068">
    <property type="entry name" value="uS15_NS1_RNA-bd_sf"/>
</dbReference>
<dbReference type="NCBIfam" id="TIGR00952">
    <property type="entry name" value="S15_bact"/>
    <property type="match status" value="1"/>
</dbReference>
<dbReference type="PANTHER" id="PTHR23321">
    <property type="entry name" value="RIBOSOMAL PROTEIN S15, BACTERIAL AND ORGANELLAR"/>
    <property type="match status" value="1"/>
</dbReference>
<dbReference type="PANTHER" id="PTHR23321:SF26">
    <property type="entry name" value="SMALL RIBOSOMAL SUBUNIT PROTEIN US15M"/>
    <property type="match status" value="1"/>
</dbReference>
<dbReference type="Pfam" id="PF00312">
    <property type="entry name" value="Ribosomal_S15"/>
    <property type="match status" value="1"/>
</dbReference>
<dbReference type="SMART" id="SM01387">
    <property type="entry name" value="Ribosomal_S15"/>
    <property type="match status" value="1"/>
</dbReference>
<dbReference type="SUPFAM" id="SSF47060">
    <property type="entry name" value="S15/NS1 RNA-binding domain"/>
    <property type="match status" value="1"/>
</dbReference>
<dbReference type="PROSITE" id="PS00362">
    <property type="entry name" value="RIBOSOMAL_S15"/>
    <property type="match status" value="1"/>
</dbReference>
<organism>
    <name type="scientific">Chromobacterium violaceum (strain ATCC 12472 / DSM 30191 / JCM 1249 / CCUG 213 / NBRC 12614 / NCIMB 9131 / NCTC 9757 / MK)</name>
    <dbReference type="NCBI Taxonomy" id="243365"/>
    <lineage>
        <taxon>Bacteria</taxon>
        <taxon>Pseudomonadati</taxon>
        <taxon>Pseudomonadota</taxon>
        <taxon>Betaproteobacteria</taxon>
        <taxon>Neisseriales</taxon>
        <taxon>Chromobacteriaceae</taxon>
        <taxon>Chromobacterium</taxon>
    </lineage>
</organism>
<sequence>MAMTAAQKAEIVKGFQRAEGDTGSSEVQIALLTARINDLTPHFKANTKDHHSRRGLLKLVSRRRRLLDYLKRTDAEGYRALITRLGLRK</sequence>
<name>RS15_CHRVO</name>
<accession>Q7NY11</accession>
<protein>
    <recommendedName>
        <fullName evidence="1">Small ribosomal subunit protein uS15</fullName>
    </recommendedName>
    <alternativeName>
        <fullName evidence="2">30S ribosomal protein S15</fullName>
    </alternativeName>
</protein>
<feature type="chain" id="PRO_0000115417" description="Small ribosomal subunit protein uS15">
    <location>
        <begin position="1"/>
        <end position="89"/>
    </location>
</feature>
<keyword id="KW-1185">Reference proteome</keyword>
<keyword id="KW-0687">Ribonucleoprotein</keyword>
<keyword id="KW-0689">Ribosomal protein</keyword>
<keyword id="KW-0694">RNA-binding</keyword>
<keyword id="KW-0699">rRNA-binding</keyword>
<evidence type="ECO:0000255" key="1">
    <source>
        <dbReference type="HAMAP-Rule" id="MF_01343"/>
    </source>
</evidence>
<evidence type="ECO:0000305" key="2"/>